<gene>
    <name evidence="1" type="primary">dnaK</name>
    <name type="ordered locus">LEPBI_I3379</name>
</gene>
<feature type="chain" id="PRO_1000119723" description="Chaperone protein DnaK">
    <location>
        <begin position="1"/>
        <end position="644"/>
    </location>
</feature>
<feature type="region of interest" description="Disordered" evidence="2">
    <location>
        <begin position="550"/>
        <end position="586"/>
    </location>
</feature>
<feature type="region of interest" description="Disordered" evidence="2">
    <location>
        <begin position="599"/>
        <end position="644"/>
    </location>
</feature>
<feature type="compositionally biased region" description="Basic and acidic residues" evidence="2">
    <location>
        <begin position="550"/>
        <end position="584"/>
    </location>
</feature>
<feature type="compositionally biased region" description="Low complexity" evidence="2">
    <location>
        <begin position="600"/>
        <end position="623"/>
    </location>
</feature>
<feature type="modified residue" description="Phosphothreonine; by autocatalysis" evidence="1">
    <location>
        <position position="199"/>
    </location>
</feature>
<organism>
    <name type="scientific">Leptospira biflexa serovar Patoc (strain Patoc 1 / ATCC 23582 / Paris)</name>
    <dbReference type="NCBI Taxonomy" id="456481"/>
    <lineage>
        <taxon>Bacteria</taxon>
        <taxon>Pseudomonadati</taxon>
        <taxon>Spirochaetota</taxon>
        <taxon>Spirochaetia</taxon>
        <taxon>Leptospirales</taxon>
        <taxon>Leptospiraceae</taxon>
        <taxon>Leptospira</taxon>
    </lineage>
</organism>
<sequence length="644" mass="69046">MSKEKIIGIDLGTTNSCVAVMEGGDPVVIQNSEGARTTPSIVAFTAKGETIVGQFAKNQAITNAVNTIRSAKRFIGRRFNEAGDESKMVSYKVIRAGNDGVKFETVSGEFTPQEIAARVLQKMKKTAEDFLGHEVKKAVVTVPAYFNDEQRQATKDAGRIAGLEVERIINEPTAAALAYGFDKKKTNAKIAVYDLGGGTFDVSILELGDGVFEVKSTNGDTHLGGDDFDNVVMQWMIDEFKKQTGIDISGDKNTVQRLKEAAEKAKIELSGTSSTQINLPFITADASGPKHLDMTLTKAKFDEITRSLVERTRIPCINALKDAGLSASEIDEVILVGGSIRIPAVQALVKEIFGKEPNKSVNPDEVVAVGAAIQGGVLAGDVTDVLLLDVTPLSLGIETLGGVMTKLIERNTTIPTRKSQVFSTAADNQTTVSVHVLQGEREMASANRTLGRFDLVGIPSAPRGVPQIEVTFDIDANGIVHVSAKDLGTGKEQKIRIESSSGLSEEEIKKMVKDAEAHAEEDKKLREAADTKNELEAIVYQLEKTIGESADKLDESEKQRAQDEIKRGREAMESGDLERMKASRDSIQQVAMQIGQKIYSQAGPEQGAPGAEAGAGASQGASGTDANGEKVVDADYTVVDEDKK</sequence>
<evidence type="ECO:0000255" key="1">
    <source>
        <dbReference type="HAMAP-Rule" id="MF_00332"/>
    </source>
</evidence>
<evidence type="ECO:0000256" key="2">
    <source>
        <dbReference type="SAM" id="MobiDB-lite"/>
    </source>
</evidence>
<dbReference type="EMBL" id="CP000786">
    <property type="protein sequence ID" value="ABZ99443.1"/>
    <property type="molecule type" value="Genomic_DNA"/>
</dbReference>
<dbReference type="RefSeq" id="WP_012390299.1">
    <property type="nucleotide sequence ID" value="NC_010602.1"/>
</dbReference>
<dbReference type="SMR" id="B0SRF1"/>
<dbReference type="STRING" id="456481.LEPBI_I3379"/>
<dbReference type="KEGG" id="lbi:LEPBI_I3379"/>
<dbReference type="HOGENOM" id="CLU_005965_2_4_12"/>
<dbReference type="OrthoDB" id="9766019at2"/>
<dbReference type="BioCyc" id="LBIF456481:LEPBI_RS16560-MONOMER"/>
<dbReference type="Proteomes" id="UP000001847">
    <property type="component" value="Chromosome I"/>
</dbReference>
<dbReference type="GO" id="GO:0005524">
    <property type="term" value="F:ATP binding"/>
    <property type="evidence" value="ECO:0007669"/>
    <property type="project" value="UniProtKB-UniRule"/>
</dbReference>
<dbReference type="GO" id="GO:0140662">
    <property type="term" value="F:ATP-dependent protein folding chaperone"/>
    <property type="evidence" value="ECO:0007669"/>
    <property type="project" value="InterPro"/>
</dbReference>
<dbReference type="GO" id="GO:0051082">
    <property type="term" value="F:unfolded protein binding"/>
    <property type="evidence" value="ECO:0007669"/>
    <property type="project" value="InterPro"/>
</dbReference>
<dbReference type="CDD" id="cd10234">
    <property type="entry name" value="ASKHA_NBD_HSP70_DnaK-like"/>
    <property type="match status" value="1"/>
</dbReference>
<dbReference type="FunFam" id="2.60.34.10:FF:000014">
    <property type="entry name" value="Chaperone protein DnaK HSP70"/>
    <property type="match status" value="1"/>
</dbReference>
<dbReference type="FunFam" id="3.30.420.40:FF:000020">
    <property type="entry name" value="Chaperone protein HscA homolog"/>
    <property type="match status" value="1"/>
</dbReference>
<dbReference type="FunFam" id="1.20.1270.10:FF:000001">
    <property type="entry name" value="Molecular chaperone DnaK"/>
    <property type="match status" value="1"/>
</dbReference>
<dbReference type="FunFam" id="3.30.420.40:FF:000004">
    <property type="entry name" value="Molecular chaperone DnaK"/>
    <property type="match status" value="1"/>
</dbReference>
<dbReference type="FunFam" id="3.90.640.10:FF:000003">
    <property type="entry name" value="Molecular chaperone DnaK"/>
    <property type="match status" value="1"/>
</dbReference>
<dbReference type="Gene3D" id="1.20.1270.10">
    <property type="match status" value="1"/>
</dbReference>
<dbReference type="Gene3D" id="3.30.420.40">
    <property type="match status" value="2"/>
</dbReference>
<dbReference type="Gene3D" id="3.90.640.10">
    <property type="entry name" value="Actin, Chain A, domain 4"/>
    <property type="match status" value="1"/>
</dbReference>
<dbReference type="Gene3D" id="2.60.34.10">
    <property type="entry name" value="Substrate Binding Domain Of DNAk, Chain A, domain 1"/>
    <property type="match status" value="1"/>
</dbReference>
<dbReference type="HAMAP" id="MF_00332">
    <property type="entry name" value="DnaK"/>
    <property type="match status" value="1"/>
</dbReference>
<dbReference type="InterPro" id="IPR043129">
    <property type="entry name" value="ATPase_NBD"/>
</dbReference>
<dbReference type="InterPro" id="IPR012725">
    <property type="entry name" value="Chaperone_DnaK"/>
</dbReference>
<dbReference type="InterPro" id="IPR018181">
    <property type="entry name" value="Heat_shock_70_CS"/>
</dbReference>
<dbReference type="InterPro" id="IPR029048">
    <property type="entry name" value="HSP70_C_sf"/>
</dbReference>
<dbReference type="InterPro" id="IPR029047">
    <property type="entry name" value="HSP70_peptide-bd_sf"/>
</dbReference>
<dbReference type="InterPro" id="IPR013126">
    <property type="entry name" value="Hsp_70_fam"/>
</dbReference>
<dbReference type="NCBIfam" id="NF001413">
    <property type="entry name" value="PRK00290.1"/>
    <property type="match status" value="1"/>
</dbReference>
<dbReference type="NCBIfam" id="NF003520">
    <property type="entry name" value="PRK05183.1"/>
    <property type="match status" value="1"/>
</dbReference>
<dbReference type="NCBIfam" id="TIGR02350">
    <property type="entry name" value="prok_dnaK"/>
    <property type="match status" value="1"/>
</dbReference>
<dbReference type="PANTHER" id="PTHR19375">
    <property type="entry name" value="HEAT SHOCK PROTEIN 70KDA"/>
    <property type="match status" value="1"/>
</dbReference>
<dbReference type="Pfam" id="PF00012">
    <property type="entry name" value="HSP70"/>
    <property type="match status" value="1"/>
</dbReference>
<dbReference type="PRINTS" id="PR00301">
    <property type="entry name" value="HEATSHOCK70"/>
</dbReference>
<dbReference type="SUPFAM" id="SSF53067">
    <property type="entry name" value="Actin-like ATPase domain"/>
    <property type="match status" value="2"/>
</dbReference>
<dbReference type="SUPFAM" id="SSF100934">
    <property type="entry name" value="Heat shock protein 70kD (HSP70), C-terminal subdomain"/>
    <property type="match status" value="1"/>
</dbReference>
<dbReference type="SUPFAM" id="SSF100920">
    <property type="entry name" value="Heat shock protein 70kD (HSP70), peptide-binding domain"/>
    <property type="match status" value="1"/>
</dbReference>
<dbReference type="PROSITE" id="PS00297">
    <property type="entry name" value="HSP70_1"/>
    <property type="match status" value="1"/>
</dbReference>
<dbReference type="PROSITE" id="PS00329">
    <property type="entry name" value="HSP70_2"/>
    <property type="match status" value="1"/>
</dbReference>
<keyword id="KW-0067">ATP-binding</keyword>
<keyword id="KW-0143">Chaperone</keyword>
<keyword id="KW-0547">Nucleotide-binding</keyword>
<keyword id="KW-0597">Phosphoprotein</keyword>
<keyword id="KW-1185">Reference proteome</keyword>
<keyword id="KW-0346">Stress response</keyword>
<accession>B0SRF1</accession>
<reference key="1">
    <citation type="journal article" date="2008" name="PLoS ONE">
        <title>Genome sequence of the saprophyte Leptospira biflexa provides insights into the evolution of Leptospira and the pathogenesis of leptospirosis.</title>
        <authorList>
            <person name="Picardeau M."/>
            <person name="Bulach D.M."/>
            <person name="Bouchier C."/>
            <person name="Zuerner R.L."/>
            <person name="Zidane N."/>
            <person name="Wilson P.J."/>
            <person name="Creno S."/>
            <person name="Kuczek E.S."/>
            <person name="Bommezzadri S."/>
            <person name="Davis J.C."/>
            <person name="McGrath A."/>
            <person name="Johnson M.J."/>
            <person name="Boursaux-Eude C."/>
            <person name="Seemann T."/>
            <person name="Rouy Z."/>
            <person name="Coppel R.L."/>
            <person name="Rood J.I."/>
            <person name="Lajus A."/>
            <person name="Davies J.K."/>
            <person name="Medigue C."/>
            <person name="Adler B."/>
        </authorList>
    </citation>
    <scope>NUCLEOTIDE SEQUENCE [LARGE SCALE GENOMIC DNA]</scope>
    <source>
        <strain>Patoc 1 / ATCC 23582 / Paris</strain>
    </source>
</reference>
<proteinExistence type="inferred from homology"/>
<name>DNAK_LEPBP</name>
<protein>
    <recommendedName>
        <fullName evidence="1">Chaperone protein DnaK</fullName>
    </recommendedName>
    <alternativeName>
        <fullName evidence="1">HSP70</fullName>
    </alternativeName>
    <alternativeName>
        <fullName evidence="1">Heat shock 70 kDa protein</fullName>
    </alternativeName>
    <alternativeName>
        <fullName evidence="1">Heat shock protein 70</fullName>
    </alternativeName>
</protein>
<comment type="function">
    <text evidence="1">Acts as a chaperone.</text>
</comment>
<comment type="induction">
    <text evidence="1">By stress conditions e.g. heat shock.</text>
</comment>
<comment type="similarity">
    <text evidence="1">Belongs to the heat shock protein 70 family.</text>
</comment>